<sequence length="187" mass="21111">MLTRRITLGISRNLSRGALINARFASSQSYLDSVANLKKDLKKAMIAKDDLRKTTIRGLLSGIKNKEIDAQGKDLDEFALHDLYSKLITQRKDSIEEFLKNNRSDLVEREESEIEIIKNYLGQLPVASEAEIDAKVSNLLTELKQSNPSLQLKDAFKKVDWKAAPSDWRASASMIKASIVRQFKTKS</sequence>
<feature type="transit peptide" description="Mitochondrion" evidence="2">
    <location>
        <begin position="1"/>
        <end position="24"/>
    </location>
</feature>
<feature type="chain" id="PRO_0000399866" description="Altered inheritance of mitochondria protein 41, mitochondrial">
    <location>
        <begin position="25"/>
        <end position="187"/>
    </location>
</feature>
<organism>
    <name type="scientific">Lachancea thermotolerans (strain ATCC 56472 / CBS 6340 / NRRL Y-8284)</name>
    <name type="common">Yeast</name>
    <name type="synonym">Kluyveromyces thermotolerans</name>
    <dbReference type="NCBI Taxonomy" id="559295"/>
    <lineage>
        <taxon>Eukaryota</taxon>
        <taxon>Fungi</taxon>
        <taxon>Dikarya</taxon>
        <taxon>Ascomycota</taxon>
        <taxon>Saccharomycotina</taxon>
        <taxon>Saccharomycetes</taxon>
        <taxon>Saccharomycetales</taxon>
        <taxon>Saccharomycetaceae</taxon>
        <taxon>Lachancea</taxon>
    </lineage>
</organism>
<comment type="subcellular location">
    <subcellularLocation>
        <location evidence="1">Mitochondrion</location>
    </subcellularLocation>
</comment>
<comment type="similarity">
    <text evidence="3">Belongs to the AIM41 family.</text>
</comment>
<protein>
    <recommendedName>
        <fullName>Altered inheritance of mitochondria protein 41, mitochondrial</fullName>
    </recommendedName>
</protein>
<accession>C5DEW2</accession>
<proteinExistence type="inferred from homology"/>
<reference key="1">
    <citation type="journal article" date="2009" name="Genome Res.">
        <title>Comparative genomics of protoploid Saccharomycetaceae.</title>
        <authorList>
            <consortium name="The Genolevures Consortium"/>
            <person name="Souciet J.-L."/>
            <person name="Dujon B."/>
            <person name="Gaillardin C."/>
            <person name="Johnston M."/>
            <person name="Baret P.V."/>
            <person name="Cliften P."/>
            <person name="Sherman D.J."/>
            <person name="Weissenbach J."/>
            <person name="Westhof E."/>
            <person name="Wincker P."/>
            <person name="Jubin C."/>
            <person name="Poulain J."/>
            <person name="Barbe V."/>
            <person name="Segurens B."/>
            <person name="Artiguenave F."/>
            <person name="Anthouard V."/>
            <person name="Vacherie B."/>
            <person name="Val M.-E."/>
            <person name="Fulton R.S."/>
            <person name="Minx P."/>
            <person name="Wilson R."/>
            <person name="Durrens P."/>
            <person name="Jean G."/>
            <person name="Marck C."/>
            <person name="Martin T."/>
            <person name="Nikolski M."/>
            <person name="Rolland T."/>
            <person name="Seret M.-L."/>
            <person name="Casaregola S."/>
            <person name="Despons L."/>
            <person name="Fairhead C."/>
            <person name="Fischer G."/>
            <person name="Lafontaine I."/>
            <person name="Leh V."/>
            <person name="Lemaire M."/>
            <person name="de Montigny J."/>
            <person name="Neuveglise C."/>
            <person name="Thierry A."/>
            <person name="Blanc-Lenfle I."/>
            <person name="Bleykasten C."/>
            <person name="Diffels J."/>
            <person name="Fritsch E."/>
            <person name="Frangeul L."/>
            <person name="Goeffon A."/>
            <person name="Jauniaux N."/>
            <person name="Kachouri-Lafond R."/>
            <person name="Payen C."/>
            <person name="Potier S."/>
            <person name="Pribylova L."/>
            <person name="Ozanne C."/>
            <person name="Richard G.-F."/>
            <person name="Sacerdot C."/>
            <person name="Straub M.-L."/>
            <person name="Talla E."/>
        </authorList>
    </citation>
    <scope>NUCLEOTIDE SEQUENCE [LARGE SCALE GENOMIC DNA]</scope>
    <source>
        <strain>ATCC 56472 / CBS 6340 / NRRL Y-8284</strain>
    </source>
</reference>
<gene>
    <name type="primary">AIM41</name>
    <name type="ordered locus">KLTH0D10252g</name>
</gene>
<name>AIM41_LACTC</name>
<keyword id="KW-0496">Mitochondrion</keyword>
<keyword id="KW-1185">Reference proteome</keyword>
<keyword id="KW-0809">Transit peptide</keyword>
<dbReference type="EMBL" id="CU928168">
    <property type="protein sequence ID" value="CAR22717.1"/>
    <property type="molecule type" value="Genomic_DNA"/>
</dbReference>
<dbReference type="RefSeq" id="XP_002553155.1">
    <property type="nucleotide sequence ID" value="XM_002553109.1"/>
</dbReference>
<dbReference type="SMR" id="C5DEW2"/>
<dbReference type="FunCoup" id="C5DEW2">
    <property type="interactions" value="126"/>
</dbReference>
<dbReference type="STRING" id="559295.C5DEW2"/>
<dbReference type="GeneID" id="8295394"/>
<dbReference type="KEGG" id="lth:KLTH0D10252g"/>
<dbReference type="eggNOG" id="ENOG502RZX9">
    <property type="taxonomic scope" value="Eukaryota"/>
</dbReference>
<dbReference type="HOGENOM" id="CLU_123460_0_0_1"/>
<dbReference type="InParanoid" id="C5DEW2"/>
<dbReference type="OMA" id="CIRTINS"/>
<dbReference type="OrthoDB" id="538640at2759"/>
<dbReference type="Proteomes" id="UP000002036">
    <property type="component" value="Chromosome D"/>
</dbReference>
<dbReference type="GO" id="GO:0005739">
    <property type="term" value="C:mitochondrion"/>
    <property type="evidence" value="ECO:0007669"/>
    <property type="project" value="UniProtKB-SubCell"/>
</dbReference>
<dbReference type="GO" id="GO:0016884">
    <property type="term" value="F:carbon-nitrogen ligase activity, with glutamine as amido-N-donor"/>
    <property type="evidence" value="ECO:0007669"/>
    <property type="project" value="InterPro"/>
</dbReference>
<dbReference type="Gene3D" id="1.10.1510.10">
    <property type="entry name" value="Uncharacterised protein YqeY/AIM41 PF09424, N-terminal domain"/>
    <property type="match status" value="1"/>
</dbReference>
<dbReference type="InterPro" id="IPR003789">
    <property type="entry name" value="Asn/Gln_tRNA_amidoTrase-B-like"/>
</dbReference>
<dbReference type="InterPro" id="IPR019004">
    <property type="entry name" value="YqeY/Aim41"/>
</dbReference>
<dbReference type="InterPro" id="IPR042184">
    <property type="entry name" value="YqeY/Aim41_N"/>
</dbReference>
<dbReference type="PANTHER" id="PTHR28055">
    <property type="entry name" value="ALTERED INHERITANCE OF MITOCHONDRIA PROTEIN 41, MITOCHONDRIAL"/>
    <property type="match status" value="1"/>
</dbReference>
<dbReference type="PANTHER" id="PTHR28055:SF1">
    <property type="entry name" value="ALTERED INHERITANCE OF MITOCHONDRIA PROTEIN 41, MITOCHONDRIAL"/>
    <property type="match status" value="1"/>
</dbReference>
<dbReference type="Pfam" id="PF09424">
    <property type="entry name" value="YqeY"/>
    <property type="match status" value="1"/>
</dbReference>
<dbReference type="SUPFAM" id="SSF89095">
    <property type="entry name" value="GatB/YqeY motif"/>
    <property type="match status" value="1"/>
</dbReference>
<evidence type="ECO:0000250" key="1"/>
<evidence type="ECO:0000255" key="2"/>
<evidence type="ECO:0000305" key="3"/>